<reference key="1">
    <citation type="journal article" date="2001" name="J. Bacteriol.">
        <title>Genome of the bacterium Streptococcus pneumoniae strain R6.</title>
        <authorList>
            <person name="Hoskins J."/>
            <person name="Alborn W.E. Jr."/>
            <person name="Arnold J."/>
            <person name="Blaszczak L.C."/>
            <person name="Burgett S."/>
            <person name="DeHoff B.S."/>
            <person name="Estrem S.T."/>
            <person name="Fritz L."/>
            <person name="Fu D.-J."/>
            <person name="Fuller W."/>
            <person name="Geringer C."/>
            <person name="Gilmour R."/>
            <person name="Glass J.S."/>
            <person name="Khoja H."/>
            <person name="Kraft A.R."/>
            <person name="Lagace R.E."/>
            <person name="LeBlanc D.J."/>
            <person name="Lee L.N."/>
            <person name="Lefkowitz E.J."/>
            <person name="Lu J."/>
            <person name="Matsushima P."/>
            <person name="McAhren S.M."/>
            <person name="McHenney M."/>
            <person name="McLeaster K."/>
            <person name="Mundy C.W."/>
            <person name="Nicas T.I."/>
            <person name="Norris F.H."/>
            <person name="O'Gara M."/>
            <person name="Peery R.B."/>
            <person name="Robertson G.T."/>
            <person name="Rockey P."/>
            <person name="Sun P.-M."/>
            <person name="Winkler M.E."/>
            <person name="Yang Y."/>
            <person name="Young-Bellido M."/>
            <person name="Zhao G."/>
            <person name="Zook C.A."/>
            <person name="Baltz R.H."/>
            <person name="Jaskunas S.R."/>
            <person name="Rosteck P.R. Jr."/>
            <person name="Skatrud P.L."/>
            <person name="Glass J.I."/>
        </authorList>
    </citation>
    <scope>NUCLEOTIDE SEQUENCE [LARGE SCALE GENOMIC DNA]</scope>
    <source>
        <strain>ATCC BAA-255 / R6</strain>
    </source>
</reference>
<feature type="chain" id="PRO_0000098480" description="Isoleucine--tRNA ligase">
    <location>
        <begin position="1"/>
        <end position="930"/>
    </location>
</feature>
<feature type="short sequence motif" description="'HIGH' region">
    <location>
        <begin position="57"/>
        <end position="67"/>
    </location>
</feature>
<feature type="short sequence motif" description="'KMSKS' region">
    <location>
        <begin position="595"/>
        <end position="599"/>
    </location>
</feature>
<feature type="binding site" evidence="1">
    <location>
        <position position="554"/>
    </location>
    <ligand>
        <name>L-isoleucyl-5'-AMP</name>
        <dbReference type="ChEBI" id="CHEBI:178002"/>
    </ligand>
</feature>
<feature type="binding site" evidence="1">
    <location>
        <position position="598"/>
    </location>
    <ligand>
        <name>ATP</name>
        <dbReference type="ChEBI" id="CHEBI:30616"/>
    </ligand>
</feature>
<feature type="binding site" evidence="1">
    <location>
        <position position="888"/>
    </location>
    <ligand>
        <name>Zn(2+)</name>
        <dbReference type="ChEBI" id="CHEBI:29105"/>
    </ligand>
</feature>
<feature type="binding site" evidence="1">
    <location>
        <position position="891"/>
    </location>
    <ligand>
        <name>Zn(2+)</name>
        <dbReference type="ChEBI" id="CHEBI:29105"/>
    </ligand>
</feature>
<feature type="binding site" evidence="1">
    <location>
        <position position="908"/>
    </location>
    <ligand>
        <name>Zn(2+)</name>
        <dbReference type="ChEBI" id="CHEBI:29105"/>
    </ligand>
</feature>
<feature type="binding site" evidence="1">
    <location>
        <position position="911"/>
    </location>
    <ligand>
        <name>Zn(2+)</name>
        <dbReference type="ChEBI" id="CHEBI:29105"/>
    </ligand>
</feature>
<evidence type="ECO:0000255" key="1">
    <source>
        <dbReference type="HAMAP-Rule" id="MF_02002"/>
    </source>
</evidence>
<sequence>MKLKDTLNLGKTEFPMRAGLPTKEPVWQKEWEYAKLYQRRQELNQGKPHFTLHDGPPYANGNIHVGHAMNKISKDIIVRSKSMSGFYAPFIPGWDTHGLPIEQVLSKQGVKRKEMDLVEYLKLCREYALSQVDKQREDFKRLGVSGDWENPYVTLTPDYEAAQIRVFGEMANKGYIYRGAKPVYWSWSSESALAEAEIEYHDLVSTSLYYANKVKDGKGVLDTDTYIVVWTTTPFTITASRGLTVGADIDYVLVQPAGEARKFVVAAELLTSLSEKFGWADVQVLETYRGQELNHIVTEHPWDTAVEELVILGDHVTTDSGTGIVHTAPGFGEDDYNVGIANNLEVAVTVDERGIMMKNAGPEFEGQFYEKVVPTVIEKLGNLLLAQEEISHSYPFDWRTKKPIIWRAVPQWFASVSKFRQEILDEIEKVKFHSEWGKVRLYNMIRDRGDWVISRQRAWGVPLPIFYAEDGTAIMVAETIEHVAQLFEEHGSSIWWERDAKDLLPEGFTHPGSPNGEFKKETDIMDVWFDSGSSWNGVVVNRPELTYPADLYLEGSDQYRGWFNSSLITSVANHGVAPYKQILSQGFALDGKGEKMSKSLGNTIAPSDVEKQFGAEILRLWVTSVDSSNDVRISMDILSQVSETYRKIRNTLRFLIANTSDFNPAQDTVAYDELRSVDKYMTIRFNQLVKTIRDAYADFEFLTIYKALVNFINVDLSAFYLDFAKDVVYIEGAKSLERRQMQTVFYDILVKITKLLTPILPHTAEEIWSYLEFETEDFVQLSELPEVQTFANQEEILDTWAAFMDFRGQAQKALEEARNAKVIGKSLEAHLTVYPNEVVKTLLEAVNSNVAQLLIVSELTIAEGPAPEAALSFEDVAFTVERATGEVCDRCRRIDPTTAERSYQAVICDHCASIVEENFAEAVAEGFEEK</sequence>
<name>SYI_STRR6</name>
<keyword id="KW-0030">Aminoacyl-tRNA synthetase</keyword>
<keyword id="KW-0067">ATP-binding</keyword>
<keyword id="KW-0963">Cytoplasm</keyword>
<keyword id="KW-0436">Ligase</keyword>
<keyword id="KW-0479">Metal-binding</keyword>
<keyword id="KW-0547">Nucleotide-binding</keyword>
<keyword id="KW-0648">Protein biosynthesis</keyword>
<keyword id="KW-1185">Reference proteome</keyword>
<keyword id="KW-0862">Zinc</keyword>
<proteinExistence type="inferred from homology"/>
<accession>Q8DNW4</accession>
<organism>
    <name type="scientific">Streptococcus pneumoniae (strain ATCC BAA-255 / R6)</name>
    <dbReference type="NCBI Taxonomy" id="171101"/>
    <lineage>
        <taxon>Bacteria</taxon>
        <taxon>Bacillati</taxon>
        <taxon>Bacillota</taxon>
        <taxon>Bacilli</taxon>
        <taxon>Lactobacillales</taxon>
        <taxon>Streptococcaceae</taxon>
        <taxon>Streptococcus</taxon>
    </lineage>
</organism>
<protein>
    <recommendedName>
        <fullName evidence="1">Isoleucine--tRNA ligase</fullName>
        <ecNumber evidence="1">6.1.1.5</ecNumber>
    </recommendedName>
    <alternativeName>
        <fullName evidence="1">Isoleucyl-tRNA synthetase</fullName>
        <shortName evidence="1">IleRS</shortName>
    </alternativeName>
</protein>
<dbReference type="EC" id="6.1.1.5" evidence="1"/>
<dbReference type="EMBL" id="AE007317">
    <property type="protein sequence ID" value="AAL00306.1"/>
    <property type="molecule type" value="Genomic_DNA"/>
</dbReference>
<dbReference type="PIR" id="E98059">
    <property type="entry name" value="E98059"/>
</dbReference>
<dbReference type="RefSeq" id="NP_359095.1">
    <property type="nucleotide sequence ID" value="NC_003098.1"/>
</dbReference>
<dbReference type="RefSeq" id="WP_000768092.1">
    <property type="nucleotide sequence ID" value="NC_003098.1"/>
</dbReference>
<dbReference type="SMR" id="Q8DNW4"/>
<dbReference type="STRING" id="171101.spr1502"/>
<dbReference type="KEGG" id="spr:spr1502"/>
<dbReference type="PATRIC" id="fig|171101.6.peg.1622"/>
<dbReference type="eggNOG" id="COG0060">
    <property type="taxonomic scope" value="Bacteria"/>
</dbReference>
<dbReference type="HOGENOM" id="CLU_001493_7_1_9"/>
<dbReference type="Proteomes" id="UP000000586">
    <property type="component" value="Chromosome"/>
</dbReference>
<dbReference type="GO" id="GO:0005829">
    <property type="term" value="C:cytosol"/>
    <property type="evidence" value="ECO:0000318"/>
    <property type="project" value="GO_Central"/>
</dbReference>
<dbReference type="GO" id="GO:0002161">
    <property type="term" value="F:aminoacyl-tRNA deacylase activity"/>
    <property type="evidence" value="ECO:0007669"/>
    <property type="project" value="InterPro"/>
</dbReference>
<dbReference type="GO" id="GO:0005524">
    <property type="term" value="F:ATP binding"/>
    <property type="evidence" value="ECO:0007669"/>
    <property type="project" value="UniProtKB-UniRule"/>
</dbReference>
<dbReference type="GO" id="GO:0004822">
    <property type="term" value="F:isoleucine-tRNA ligase activity"/>
    <property type="evidence" value="ECO:0000318"/>
    <property type="project" value="GO_Central"/>
</dbReference>
<dbReference type="GO" id="GO:0000049">
    <property type="term" value="F:tRNA binding"/>
    <property type="evidence" value="ECO:0007669"/>
    <property type="project" value="InterPro"/>
</dbReference>
<dbReference type="GO" id="GO:0008270">
    <property type="term" value="F:zinc ion binding"/>
    <property type="evidence" value="ECO:0007669"/>
    <property type="project" value="UniProtKB-UniRule"/>
</dbReference>
<dbReference type="GO" id="GO:0006428">
    <property type="term" value="P:isoleucyl-tRNA aminoacylation"/>
    <property type="evidence" value="ECO:0000318"/>
    <property type="project" value="GO_Central"/>
</dbReference>
<dbReference type="CDD" id="cd07960">
    <property type="entry name" value="Anticodon_Ia_Ile_BEm"/>
    <property type="match status" value="1"/>
</dbReference>
<dbReference type="CDD" id="cd00818">
    <property type="entry name" value="IleRS_core"/>
    <property type="match status" value="1"/>
</dbReference>
<dbReference type="FunFam" id="1.10.10.830:FF:000001">
    <property type="entry name" value="Isoleucine--tRNA ligase"/>
    <property type="match status" value="1"/>
</dbReference>
<dbReference type="FunFam" id="1.10.730.20:FF:000001">
    <property type="entry name" value="Isoleucine--tRNA ligase"/>
    <property type="match status" value="1"/>
</dbReference>
<dbReference type="FunFam" id="3.40.50.620:FF:000092">
    <property type="entry name" value="Isoleucine--tRNA ligase"/>
    <property type="match status" value="1"/>
</dbReference>
<dbReference type="FunFam" id="3.90.740.10:FF:000006">
    <property type="entry name" value="Isoleucine--tRNA ligase"/>
    <property type="match status" value="1"/>
</dbReference>
<dbReference type="Gene3D" id="1.10.730.20">
    <property type="match status" value="1"/>
</dbReference>
<dbReference type="Gene3D" id="3.40.50.620">
    <property type="entry name" value="HUPs"/>
    <property type="match status" value="2"/>
</dbReference>
<dbReference type="Gene3D" id="1.10.10.830">
    <property type="entry name" value="Ile-tRNA synthetase CP2 domain-like"/>
    <property type="match status" value="1"/>
</dbReference>
<dbReference type="Gene3D" id="3.90.740.10">
    <property type="entry name" value="Valyl/Leucyl/Isoleucyl-tRNA synthetase, editing domain"/>
    <property type="match status" value="1"/>
</dbReference>
<dbReference type="HAMAP" id="MF_02002">
    <property type="entry name" value="Ile_tRNA_synth_type1"/>
    <property type="match status" value="1"/>
</dbReference>
<dbReference type="InterPro" id="IPR001412">
    <property type="entry name" value="aa-tRNA-synth_I_CS"/>
</dbReference>
<dbReference type="InterPro" id="IPR002300">
    <property type="entry name" value="aa-tRNA-synth_Ia"/>
</dbReference>
<dbReference type="InterPro" id="IPR033708">
    <property type="entry name" value="Anticodon_Ile_BEm"/>
</dbReference>
<dbReference type="InterPro" id="IPR002301">
    <property type="entry name" value="Ile-tRNA-ligase"/>
</dbReference>
<dbReference type="InterPro" id="IPR023585">
    <property type="entry name" value="Ile-tRNA-ligase_type1"/>
</dbReference>
<dbReference type="InterPro" id="IPR050081">
    <property type="entry name" value="Ile-tRNA_ligase"/>
</dbReference>
<dbReference type="InterPro" id="IPR013155">
    <property type="entry name" value="M/V/L/I-tRNA-synth_anticd-bd"/>
</dbReference>
<dbReference type="InterPro" id="IPR014729">
    <property type="entry name" value="Rossmann-like_a/b/a_fold"/>
</dbReference>
<dbReference type="InterPro" id="IPR009080">
    <property type="entry name" value="tRNAsynth_Ia_anticodon-bd"/>
</dbReference>
<dbReference type="InterPro" id="IPR009008">
    <property type="entry name" value="Val/Leu/Ile-tRNA-synth_edit"/>
</dbReference>
<dbReference type="InterPro" id="IPR010663">
    <property type="entry name" value="Znf_FPG/IleRS"/>
</dbReference>
<dbReference type="NCBIfam" id="TIGR00392">
    <property type="entry name" value="ileS"/>
    <property type="match status" value="1"/>
</dbReference>
<dbReference type="PANTHER" id="PTHR42765:SF1">
    <property type="entry name" value="ISOLEUCINE--TRNA LIGASE, MITOCHONDRIAL"/>
    <property type="match status" value="1"/>
</dbReference>
<dbReference type="PANTHER" id="PTHR42765">
    <property type="entry name" value="SOLEUCYL-TRNA SYNTHETASE"/>
    <property type="match status" value="1"/>
</dbReference>
<dbReference type="Pfam" id="PF08264">
    <property type="entry name" value="Anticodon_1"/>
    <property type="match status" value="1"/>
</dbReference>
<dbReference type="Pfam" id="PF00133">
    <property type="entry name" value="tRNA-synt_1"/>
    <property type="match status" value="1"/>
</dbReference>
<dbReference type="Pfam" id="PF06827">
    <property type="entry name" value="zf-FPG_IleRS"/>
    <property type="match status" value="1"/>
</dbReference>
<dbReference type="PRINTS" id="PR00984">
    <property type="entry name" value="TRNASYNTHILE"/>
</dbReference>
<dbReference type="SUPFAM" id="SSF47323">
    <property type="entry name" value="Anticodon-binding domain of a subclass of class I aminoacyl-tRNA synthetases"/>
    <property type="match status" value="1"/>
</dbReference>
<dbReference type="SUPFAM" id="SSF52374">
    <property type="entry name" value="Nucleotidylyl transferase"/>
    <property type="match status" value="1"/>
</dbReference>
<dbReference type="SUPFAM" id="SSF50677">
    <property type="entry name" value="ValRS/IleRS/LeuRS editing domain"/>
    <property type="match status" value="1"/>
</dbReference>
<dbReference type="PROSITE" id="PS00178">
    <property type="entry name" value="AA_TRNA_LIGASE_I"/>
    <property type="match status" value="1"/>
</dbReference>
<gene>
    <name evidence="1" type="primary">ileS</name>
    <name type="ordered locus">spr1502</name>
</gene>
<comment type="function">
    <text evidence="1">Catalyzes the attachment of isoleucine to tRNA(Ile). As IleRS can inadvertently accommodate and process structurally similar amino acids such as valine, to avoid such errors it has two additional distinct tRNA(Ile)-dependent editing activities. One activity is designated as 'pretransfer' editing and involves the hydrolysis of activated Val-AMP. The other activity is designated 'posttransfer' editing and involves deacylation of mischarged Val-tRNA(Ile).</text>
</comment>
<comment type="catalytic activity">
    <reaction evidence="1">
        <text>tRNA(Ile) + L-isoleucine + ATP = L-isoleucyl-tRNA(Ile) + AMP + diphosphate</text>
        <dbReference type="Rhea" id="RHEA:11060"/>
        <dbReference type="Rhea" id="RHEA-COMP:9666"/>
        <dbReference type="Rhea" id="RHEA-COMP:9695"/>
        <dbReference type="ChEBI" id="CHEBI:30616"/>
        <dbReference type="ChEBI" id="CHEBI:33019"/>
        <dbReference type="ChEBI" id="CHEBI:58045"/>
        <dbReference type="ChEBI" id="CHEBI:78442"/>
        <dbReference type="ChEBI" id="CHEBI:78528"/>
        <dbReference type="ChEBI" id="CHEBI:456215"/>
        <dbReference type="EC" id="6.1.1.5"/>
    </reaction>
</comment>
<comment type="cofactor">
    <cofactor evidence="1">
        <name>Zn(2+)</name>
        <dbReference type="ChEBI" id="CHEBI:29105"/>
    </cofactor>
    <text evidence="1">Binds 1 zinc ion per subunit.</text>
</comment>
<comment type="subunit">
    <text evidence="1">Monomer.</text>
</comment>
<comment type="subcellular location">
    <subcellularLocation>
        <location evidence="1">Cytoplasm</location>
    </subcellularLocation>
</comment>
<comment type="domain">
    <text evidence="1">IleRS has two distinct active sites: one for aminoacylation and one for editing. The misactivated valine is translocated from the active site to the editing site, which sterically excludes the correctly activated isoleucine. The single editing site contains two valyl binding pockets, one specific for each substrate (Val-AMP or Val-tRNA(Ile)).</text>
</comment>
<comment type="similarity">
    <text evidence="1">Belongs to the class-I aminoacyl-tRNA synthetase family. IleS type 1 subfamily.</text>
</comment>